<organism>
    <name type="scientific">Maricaulis maris (strain MCS10)</name>
    <name type="common">Caulobacter maris</name>
    <dbReference type="NCBI Taxonomy" id="394221"/>
    <lineage>
        <taxon>Bacteria</taxon>
        <taxon>Pseudomonadati</taxon>
        <taxon>Pseudomonadota</taxon>
        <taxon>Alphaproteobacteria</taxon>
        <taxon>Maricaulales</taxon>
        <taxon>Maricaulaceae</taxon>
        <taxon>Maricaulis</taxon>
    </lineage>
</organism>
<gene>
    <name evidence="1" type="primary">pstB</name>
    <name type="ordered locus">Mmar10_0481</name>
</gene>
<dbReference type="EC" id="7.3.2.1" evidence="1"/>
<dbReference type="EMBL" id="CP000449">
    <property type="protein sequence ID" value="ABI64774.1"/>
    <property type="molecule type" value="Genomic_DNA"/>
</dbReference>
<dbReference type="RefSeq" id="WP_011642421.1">
    <property type="nucleotide sequence ID" value="NC_008347.1"/>
</dbReference>
<dbReference type="SMR" id="Q0ASG3"/>
<dbReference type="STRING" id="394221.Mmar10_0481"/>
<dbReference type="KEGG" id="mmr:Mmar10_0481"/>
<dbReference type="eggNOG" id="COG1117">
    <property type="taxonomic scope" value="Bacteria"/>
</dbReference>
<dbReference type="HOGENOM" id="CLU_000604_1_22_5"/>
<dbReference type="OrthoDB" id="9806149at2"/>
<dbReference type="Proteomes" id="UP000001964">
    <property type="component" value="Chromosome"/>
</dbReference>
<dbReference type="GO" id="GO:0005886">
    <property type="term" value="C:plasma membrane"/>
    <property type="evidence" value="ECO:0007669"/>
    <property type="project" value="UniProtKB-SubCell"/>
</dbReference>
<dbReference type="GO" id="GO:0005524">
    <property type="term" value="F:ATP binding"/>
    <property type="evidence" value="ECO:0007669"/>
    <property type="project" value="UniProtKB-KW"/>
</dbReference>
<dbReference type="GO" id="GO:0016887">
    <property type="term" value="F:ATP hydrolysis activity"/>
    <property type="evidence" value="ECO:0007669"/>
    <property type="project" value="InterPro"/>
</dbReference>
<dbReference type="GO" id="GO:0015415">
    <property type="term" value="F:ATPase-coupled phosphate ion transmembrane transporter activity"/>
    <property type="evidence" value="ECO:0007669"/>
    <property type="project" value="UniProtKB-EC"/>
</dbReference>
<dbReference type="GO" id="GO:0035435">
    <property type="term" value="P:phosphate ion transmembrane transport"/>
    <property type="evidence" value="ECO:0007669"/>
    <property type="project" value="InterPro"/>
</dbReference>
<dbReference type="CDD" id="cd03260">
    <property type="entry name" value="ABC_PstB_phosphate_transporter"/>
    <property type="match status" value="1"/>
</dbReference>
<dbReference type="Gene3D" id="3.40.50.300">
    <property type="entry name" value="P-loop containing nucleotide triphosphate hydrolases"/>
    <property type="match status" value="1"/>
</dbReference>
<dbReference type="InterPro" id="IPR003593">
    <property type="entry name" value="AAA+_ATPase"/>
</dbReference>
<dbReference type="InterPro" id="IPR003439">
    <property type="entry name" value="ABC_transporter-like_ATP-bd"/>
</dbReference>
<dbReference type="InterPro" id="IPR017871">
    <property type="entry name" value="ABC_transporter-like_CS"/>
</dbReference>
<dbReference type="InterPro" id="IPR027417">
    <property type="entry name" value="P-loop_NTPase"/>
</dbReference>
<dbReference type="InterPro" id="IPR005670">
    <property type="entry name" value="PstB-like"/>
</dbReference>
<dbReference type="NCBIfam" id="TIGR00972">
    <property type="entry name" value="3a0107s01c2"/>
    <property type="match status" value="1"/>
</dbReference>
<dbReference type="PANTHER" id="PTHR43423">
    <property type="entry name" value="ABC TRANSPORTER I FAMILY MEMBER 17"/>
    <property type="match status" value="1"/>
</dbReference>
<dbReference type="PANTHER" id="PTHR43423:SF1">
    <property type="entry name" value="ABC TRANSPORTER I FAMILY MEMBER 17"/>
    <property type="match status" value="1"/>
</dbReference>
<dbReference type="Pfam" id="PF00005">
    <property type="entry name" value="ABC_tran"/>
    <property type="match status" value="1"/>
</dbReference>
<dbReference type="SMART" id="SM00382">
    <property type="entry name" value="AAA"/>
    <property type="match status" value="1"/>
</dbReference>
<dbReference type="SUPFAM" id="SSF52540">
    <property type="entry name" value="P-loop containing nucleoside triphosphate hydrolases"/>
    <property type="match status" value="1"/>
</dbReference>
<dbReference type="PROSITE" id="PS00211">
    <property type="entry name" value="ABC_TRANSPORTER_1"/>
    <property type="match status" value="1"/>
</dbReference>
<dbReference type="PROSITE" id="PS50893">
    <property type="entry name" value="ABC_TRANSPORTER_2"/>
    <property type="match status" value="1"/>
</dbReference>
<dbReference type="PROSITE" id="PS51238">
    <property type="entry name" value="PSTB"/>
    <property type="match status" value="1"/>
</dbReference>
<evidence type="ECO:0000255" key="1">
    <source>
        <dbReference type="HAMAP-Rule" id="MF_01702"/>
    </source>
</evidence>
<accession>Q0ASG3</accession>
<reference key="1">
    <citation type="submission" date="2006-08" db="EMBL/GenBank/DDBJ databases">
        <title>Complete sequence of Maricaulis maris MCS10.</title>
        <authorList>
            <consortium name="US DOE Joint Genome Institute"/>
            <person name="Copeland A."/>
            <person name="Lucas S."/>
            <person name="Lapidus A."/>
            <person name="Barry K."/>
            <person name="Detter J.C."/>
            <person name="Glavina del Rio T."/>
            <person name="Hammon N."/>
            <person name="Israni S."/>
            <person name="Dalin E."/>
            <person name="Tice H."/>
            <person name="Pitluck S."/>
            <person name="Saunders E."/>
            <person name="Brettin T."/>
            <person name="Bruce D."/>
            <person name="Han C."/>
            <person name="Tapia R."/>
            <person name="Gilna P."/>
            <person name="Schmutz J."/>
            <person name="Larimer F."/>
            <person name="Land M."/>
            <person name="Hauser L."/>
            <person name="Kyrpides N."/>
            <person name="Mikhailova N."/>
            <person name="Viollier P."/>
            <person name="Stephens C."/>
            <person name="Richardson P."/>
        </authorList>
    </citation>
    <scope>NUCLEOTIDE SEQUENCE [LARGE SCALE GENOMIC DNA]</scope>
    <source>
        <strain>MCS10</strain>
    </source>
</reference>
<feature type="chain" id="PRO_0000272475" description="Phosphate import ATP-binding protein PstB">
    <location>
        <begin position="1"/>
        <end position="263"/>
    </location>
</feature>
<feature type="domain" description="ABC transporter" evidence="1">
    <location>
        <begin position="16"/>
        <end position="258"/>
    </location>
</feature>
<feature type="binding site" evidence="1">
    <location>
        <begin position="48"/>
        <end position="55"/>
    </location>
    <ligand>
        <name>ATP</name>
        <dbReference type="ChEBI" id="CHEBI:30616"/>
    </ligand>
</feature>
<keyword id="KW-0067">ATP-binding</keyword>
<keyword id="KW-0997">Cell inner membrane</keyword>
<keyword id="KW-1003">Cell membrane</keyword>
<keyword id="KW-0472">Membrane</keyword>
<keyword id="KW-0547">Nucleotide-binding</keyword>
<keyword id="KW-0592">Phosphate transport</keyword>
<keyword id="KW-1185">Reference proteome</keyword>
<keyword id="KW-1278">Translocase</keyword>
<keyword id="KW-0813">Transport</keyword>
<name>PSTB_MARMM</name>
<comment type="function">
    <text evidence="1">Part of the ABC transporter complex PstSACB involved in phosphate import. Responsible for energy coupling to the transport system.</text>
</comment>
<comment type="catalytic activity">
    <reaction evidence="1">
        <text>phosphate(out) + ATP + H2O = ADP + 2 phosphate(in) + H(+)</text>
        <dbReference type="Rhea" id="RHEA:24440"/>
        <dbReference type="ChEBI" id="CHEBI:15377"/>
        <dbReference type="ChEBI" id="CHEBI:15378"/>
        <dbReference type="ChEBI" id="CHEBI:30616"/>
        <dbReference type="ChEBI" id="CHEBI:43474"/>
        <dbReference type="ChEBI" id="CHEBI:456216"/>
        <dbReference type="EC" id="7.3.2.1"/>
    </reaction>
</comment>
<comment type="subunit">
    <text evidence="1">The complex is composed of two ATP-binding proteins (PstB), two transmembrane proteins (PstC and PstA) and a solute-binding protein (PstS).</text>
</comment>
<comment type="subcellular location">
    <subcellularLocation>
        <location evidence="1">Cell inner membrane</location>
        <topology evidence="1">Peripheral membrane protein</topology>
    </subcellularLocation>
</comment>
<comment type="similarity">
    <text evidence="1">Belongs to the ABC transporter superfamily. Phosphate importer (TC 3.A.1.7) family.</text>
</comment>
<proteinExistence type="inferred from homology"/>
<sequence length="263" mass="28814">MTDTPQNPTADLPIKVTARNVTVSYSGKQALHDVSIDIPDRSVTAFIGPSGCGKSTFLRCLNRMNDTIDGAVVGGSLTIDGQEINDKTIDPVVLRASVGMVFQKPNPFPKSIYDNVAYGPRIHGLALTRPELDEIVENALRKAGLWNEVSDRLNHPGTGLSGGQQQRLVIARAIAVNPEVILMDEPCSALDPIATARIEELIDELRENYCIIIVTHSMQQAARVSQHTAFFHMGNLVEYGPTEDIFTNPRDTRTQDYITGRFG</sequence>
<protein>
    <recommendedName>
        <fullName evidence="1">Phosphate import ATP-binding protein PstB</fullName>
        <ecNumber evidence="1">7.3.2.1</ecNumber>
    </recommendedName>
    <alternativeName>
        <fullName evidence="1">ABC phosphate transporter</fullName>
    </alternativeName>
    <alternativeName>
        <fullName evidence="1">Phosphate-transporting ATPase</fullName>
    </alternativeName>
</protein>